<feature type="chain" id="PRO_0000410131" description="Kynureninase">
    <location>
        <begin position="1"/>
        <end position="453"/>
    </location>
</feature>
<feature type="binding site" evidence="1">
    <location>
        <position position="114"/>
    </location>
    <ligand>
        <name>pyridoxal 5'-phosphate</name>
        <dbReference type="ChEBI" id="CHEBI:597326"/>
    </ligand>
</feature>
<feature type="binding site" evidence="1">
    <location>
        <position position="115"/>
    </location>
    <ligand>
        <name>pyridoxal 5'-phosphate</name>
        <dbReference type="ChEBI" id="CHEBI:597326"/>
    </ligand>
</feature>
<feature type="binding site" evidence="1">
    <location>
        <begin position="142"/>
        <end position="145"/>
    </location>
    <ligand>
        <name>pyridoxal 5'-phosphate</name>
        <dbReference type="ChEBI" id="CHEBI:597326"/>
    </ligand>
</feature>
<feature type="binding site" evidence="1">
    <location>
        <position position="232"/>
    </location>
    <ligand>
        <name>pyridoxal 5'-phosphate</name>
        <dbReference type="ChEBI" id="CHEBI:597326"/>
    </ligand>
</feature>
<feature type="binding site" evidence="1">
    <location>
        <position position="235"/>
    </location>
    <ligand>
        <name>pyridoxal 5'-phosphate</name>
        <dbReference type="ChEBI" id="CHEBI:597326"/>
    </ligand>
</feature>
<feature type="binding site" evidence="1">
    <location>
        <position position="257"/>
    </location>
    <ligand>
        <name>pyridoxal 5'-phosphate</name>
        <dbReference type="ChEBI" id="CHEBI:597326"/>
    </ligand>
</feature>
<feature type="binding site" evidence="1">
    <location>
        <position position="286"/>
    </location>
    <ligand>
        <name>pyridoxal 5'-phosphate</name>
        <dbReference type="ChEBI" id="CHEBI:597326"/>
    </ligand>
</feature>
<feature type="modified residue" description="N6-(pyridoxal phosphate)lysine" evidence="1">
    <location>
        <position position="258"/>
    </location>
</feature>
<evidence type="ECO:0000255" key="1">
    <source>
        <dbReference type="HAMAP-Rule" id="MF_03017"/>
    </source>
</evidence>
<name>KYNU_CRYNB</name>
<proteinExistence type="inferred from homology"/>
<organism>
    <name type="scientific">Cryptococcus neoformans var. neoformans serotype D (strain B-3501A)</name>
    <name type="common">Filobasidiella neoformans</name>
    <dbReference type="NCBI Taxonomy" id="283643"/>
    <lineage>
        <taxon>Eukaryota</taxon>
        <taxon>Fungi</taxon>
        <taxon>Dikarya</taxon>
        <taxon>Basidiomycota</taxon>
        <taxon>Agaricomycotina</taxon>
        <taxon>Tremellomycetes</taxon>
        <taxon>Tremellales</taxon>
        <taxon>Cryptococcaceae</taxon>
        <taxon>Cryptococcus</taxon>
        <taxon>Cryptococcus neoformans species complex</taxon>
    </lineage>
</organism>
<comment type="function">
    <text evidence="1">Catalyzes the cleavage of L-kynurenine (L-Kyn) and L-3-hydroxykynurenine (L-3OHKyn) into anthranilic acid (AA) and 3-hydroxyanthranilic acid (3-OHAA), respectively.</text>
</comment>
<comment type="catalytic activity">
    <reaction evidence="1">
        <text>L-kynurenine + H2O = anthranilate + L-alanine + H(+)</text>
        <dbReference type="Rhea" id="RHEA:16813"/>
        <dbReference type="ChEBI" id="CHEBI:15377"/>
        <dbReference type="ChEBI" id="CHEBI:15378"/>
        <dbReference type="ChEBI" id="CHEBI:16567"/>
        <dbReference type="ChEBI" id="CHEBI:57959"/>
        <dbReference type="ChEBI" id="CHEBI:57972"/>
        <dbReference type="EC" id="3.7.1.3"/>
    </reaction>
</comment>
<comment type="catalytic activity">
    <reaction evidence="1">
        <text>3-hydroxy-L-kynurenine + H2O = 3-hydroxyanthranilate + L-alanine + H(+)</text>
        <dbReference type="Rhea" id="RHEA:25143"/>
        <dbReference type="ChEBI" id="CHEBI:15377"/>
        <dbReference type="ChEBI" id="CHEBI:15378"/>
        <dbReference type="ChEBI" id="CHEBI:36559"/>
        <dbReference type="ChEBI" id="CHEBI:57972"/>
        <dbReference type="ChEBI" id="CHEBI:58125"/>
        <dbReference type="EC" id="3.7.1.3"/>
    </reaction>
</comment>
<comment type="cofactor">
    <cofactor evidence="1">
        <name>pyridoxal 5'-phosphate</name>
        <dbReference type="ChEBI" id="CHEBI:597326"/>
    </cofactor>
</comment>
<comment type="pathway">
    <text evidence="1">Amino-acid degradation; L-kynurenine degradation; L-alanine and anthranilate from L-kynurenine: step 1/1.</text>
</comment>
<comment type="pathway">
    <text evidence="1">Cofactor biosynthesis; NAD(+) biosynthesis; quinolinate from L-kynurenine: step 2/3.</text>
</comment>
<comment type="subunit">
    <text evidence="1">Homodimer.</text>
</comment>
<comment type="subcellular location">
    <subcellularLocation>
        <location evidence="1">Cytoplasm</location>
    </subcellularLocation>
</comment>
<comment type="similarity">
    <text evidence="1">Belongs to the kynureninase family.</text>
</comment>
<protein>
    <recommendedName>
        <fullName evidence="1">Kynureninase</fullName>
        <ecNumber evidence="1">3.7.1.3</ecNumber>
    </recommendedName>
    <alternativeName>
        <fullName evidence="1">Biosynthesis of nicotinic acid protein 5</fullName>
    </alternativeName>
    <alternativeName>
        <fullName evidence="1">L-kynurenine hydrolase</fullName>
    </alternativeName>
</protein>
<accession>P0CO53</accession>
<accession>Q55W17</accession>
<accession>Q5KK77</accession>
<sequence length="453" mass="51170">MSNDLPTKKDLVKWDQEDALNWTRGEYEIPNSKACGGEADGKAIYFCGNSLGLLNKKARQHIMEELDVWSTSSVTGHFNHPYQRPWKHVDEPLTPHLAKLVGAREEEVAHTSTLTSNMHNLFTSFYQPTEKRWKIVIEKGSFPSDWYAVHSHPRLHDKVLRPEQIDNAIIALVPREGEDTLRTEDILKVLDDNKDSIAIVWLPLVQYYTGQLFDISSISPKVHEIGALLGLDMAHGIGNVECKLNEWNVDFAVWCTYKYLNAGPAAIGGFYIRSGLEDGGRRLAGWWGNDARTRFHMSPNFQPTPGAKGYQHSCTPVFSSIPLLATLQLIEAVGFSNMVEKARRLTGTLEALLKASRYYVHPADPKGKIGFKIITPAAPYRGTQLSLVILPEEEHVMPKVFDRMLRKGLVGDERKPSVIRLSPVVLYNTFEEVGRAVEIVEEALEEEEEERKR</sequence>
<gene>
    <name evidence="1" type="primary">BNA5</name>
    <name type="ordered locus">CNBC3200</name>
</gene>
<keyword id="KW-0963">Cytoplasm</keyword>
<keyword id="KW-0378">Hydrolase</keyword>
<keyword id="KW-0662">Pyridine nucleotide biosynthesis</keyword>
<keyword id="KW-0663">Pyridoxal phosphate</keyword>
<dbReference type="EC" id="3.7.1.3" evidence="1"/>
<dbReference type="EMBL" id="AAEY01000013">
    <property type="protein sequence ID" value="EAL22182.1"/>
    <property type="molecule type" value="Genomic_DNA"/>
</dbReference>
<dbReference type="RefSeq" id="XP_776829.1">
    <property type="nucleotide sequence ID" value="XM_771736.1"/>
</dbReference>
<dbReference type="SMR" id="P0CO53"/>
<dbReference type="GeneID" id="4934985"/>
<dbReference type="KEGG" id="cnb:CNBC3200"/>
<dbReference type="VEuPathDB" id="FungiDB:CNBC3200"/>
<dbReference type="HOGENOM" id="CLU_003433_4_0_1"/>
<dbReference type="OrthoDB" id="1730at5206"/>
<dbReference type="UniPathway" id="UPA00253">
    <property type="reaction ID" value="UER00329"/>
</dbReference>
<dbReference type="UniPathway" id="UPA00334">
    <property type="reaction ID" value="UER00455"/>
</dbReference>
<dbReference type="GO" id="GO:0005737">
    <property type="term" value="C:cytoplasm"/>
    <property type="evidence" value="ECO:0007669"/>
    <property type="project" value="UniProtKB-SubCell"/>
</dbReference>
<dbReference type="GO" id="GO:0030429">
    <property type="term" value="F:kynureninase activity"/>
    <property type="evidence" value="ECO:0007669"/>
    <property type="project" value="UniProtKB-UniRule"/>
</dbReference>
<dbReference type="GO" id="GO:0030170">
    <property type="term" value="F:pyridoxal phosphate binding"/>
    <property type="evidence" value="ECO:0007669"/>
    <property type="project" value="UniProtKB-UniRule"/>
</dbReference>
<dbReference type="GO" id="GO:0034354">
    <property type="term" value="P:'de novo' NAD biosynthetic process from L-tryptophan"/>
    <property type="evidence" value="ECO:0007669"/>
    <property type="project" value="UniProtKB-UniRule"/>
</dbReference>
<dbReference type="GO" id="GO:0043420">
    <property type="term" value="P:anthranilate metabolic process"/>
    <property type="evidence" value="ECO:0007669"/>
    <property type="project" value="UniProtKB-UniRule"/>
</dbReference>
<dbReference type="GO" id="GO:0097053">
    <property type="term" value="P:L-kynurenine catabolic process"/>
    <property type="evidence" value="ECO:0007669"/>
    <property type="project" value="UniProtKB-UniRule"/>
</dbReference>
<dbReference type="GO" id="GO:0019441">
    <property type="term" value="P:L-tryptophan catabolic process to kynurenine"/>
    <property type="evidence" value="ECO:0007669"/>
    <property type="project" value="TreeGrafter"/>
</dbReference>
<dbReference type="GO" id="GO:0019805">
    <property type="term" value="P:quinolinate biosynthetic process"/>
    <property type="evidence" value="ECO:0007669"/>
    <property type="project" value="UniProtKB-UniRule"/>
</dbReference>
<dbReference type="FunFam" id="3.40.640.10:FF:000031">
    <property type="entry name" value="Kynureninase"/>
    <property type="match status" value="1"/>
</dbReference>
<dbReference type="Gene3D" id="3.90.1150.10">
    <property type="entry name" value="Aspartate Aminotransferase, domain 1"/>
    <property type="match status" value="1"/>
</dbReference>
<dbReference type="Gene3D" id="3.40.640.10">
    <property type="entry name" value="Type I PLP-dependent aspartate aminotransferase-like (Major domain)"/>
    <property type="match status" value="1"/>
</dbReference>
<dbReference type="HAMAP" id="MF_01970">
    <property type="entry name" value="Kynureninase"/>
    <property type="match status" value="1"/>
</dbReference>
<dbReference type="InterPro" id="IPR000192">
    <property type="entry name" value="Aminotrans_V_dom"/>
</dbReference>
<dbReference type="InterPro" id="IPR010111">
    <property type="entry name" value="Kynureninase"/>
</dbReference>
<dbReference type="InterPro" id="IPR015424">
    <property type="entry name" value="PyrdxlP-dep_Trfase"/>
</dbReference>
<dbReference type="InterPro" id="IPR015421">
    <property type="entry name" value="PyrdxlP-dep_Trfase_major"/>
</dbReference>
<dbReference type="InterPro" id="IPR015422">
    <property type="entry name" value="PyrdxlP-dep_Trfase_small"/>
</dbReference>
<dbReference type="NCBIfam" id="TIGR01814">
    <property type="entry name" value="kynureninase"/>
    <property type="match status" value="1"/>
</dbReference>
<dbReference type="PANTHER" id="PTHR14084">
    <property type="entry name" value="KYNURENINASE"/>
    <property type="match status" value="1"/>
</dbReference>
<dbReference type="PANTHER" id="PTHR14084:SF0">
    <property type="entry name" value="KYNURENINASE"/>
    <property type="match status" value="1"/>
</dbReference>
<dbReference type="Pfam" id="PF00266">
    <property type="entry name" value="Aminotran_5"/>
    <property type="match status" value="1"/>
</dbReference>
<dbReference type="Pfam" id="PF22580">
    <property type="entry name" value="KYNU_C"/>
    <property type="match status" value="1"/>
</dbReference>
<dbReference type="PIRSF" id="PIRSF038800">
    <property type="entry name" value="KYNU"/>
    <property type="match status" value="1"/>
</dbReference>
<dbReference type="SUPFAM" id="SSF53383">
    <property type="entry name" value="PLP-dependent transferases"/>
    <property type="match status" value="1"/>
</dbReference>
<reference key="1">
    <citation type="journal article" date="2005" name="Science">
        <title>The genome of the basidiomycetous yeast and human pathogen Cryptococcus neoformans.</title>
        <authorList>
            <person name="Loftus B.J."/>
            <person name="Fung E."/>
            <person name="Roncaglia P."/>
            <person name="Rowley D."/>
            <person name="Amedeo P."/>
            <person name="Bruno D."/>
            <person name="Vamathevan J."/>
            <person name="Miranda M."/>
            <person name="Anderson I.J."/>
            <person name="Fraser J.A."/>
            <person name="Allen J.E."/>
            <person name="Bosdet I.E."/>
            <person name="Brent M.R."/>
            <person name="Chiu R."/>
            <person name="Doering T.L."/>
            <person name="Donlin M.J."/>
            <person name="D'Souza C.A."/>
            <person name="Fox D.S."/>
            <person name="Grinberg V."/>
            <person name="Fu J."/>
            <person name="Fukushima M."/>
            <person name="Haas B.J."/>
            <person name="Huang J.C."/>
            <person name="Janbon G."/>
            <person name="Jones S.J.M."/>
            <person name="Koo H.L."/>
            <person name="Krzywinski M.I."/>
            <person name="Kwon-Chung K.J."/>
            <person name="Lengeler K.B."/>
            <person name="Maiti R."/>
            <person name="Marra M.A."/>
            <person name="Marra R.E."/>
            <person name="Mathewson C.A."/>
            <person name="Mitchell T.G."/>
            <person name="Pertea M."/>
            <person name="Riggs F.R."/>
            <person name="Salzberg S.L."/>
            <person name="Schein J.E."/>
            <person name="Shvartsbeyn A."/>
            <person name="Shin H."/>
            <person name="Shumway M."/>
            <person name="Specht C.A."/>
            <person name="Suh B.B."/>
            <person name="Tenney A."/>
            <person name="Utterback T.R."/>
            <person name="Wickes B.L."/>
            <person name="Wortman J.R."/>
            <person name="Wye N.H."/>
            <person name="Kronstad J.W."/>
            <person name="Lodge J.K."/>
            <person name="Heitman J."/>
            <person name="Davis R.W."/>
            <person name="Fraser C.M."/>
            <person name="Hyman R.W."/>
        </authorList>
    </citation>
    <scope>NUCLEOTIDE SEQUENCE [LARGE SCALE GENOMIC DNA]</scope>
    <source>
        <strain>B-3501A</strain>
    </source>
</reference>